<protein>
    <recommendedName>
        <fullName evidence="1">Phospho-N-acetylmuramoyl-pentapeptide-transferase</fullName>
        <ecNumber evidence="1">2.7.8.13</ecNumber>
    </recommendedName>
    <alternativeName>
        <fullName evidence="1">UDP-MurNAc-pentapeptide phosphotransferase</fullName>
    </alternativeName>
</protein>
<name>MRAY_GLAP5</name>
<proteinExistence type="inferred from homology"/>
<organism>
    <name type="scientific">Glaesserella parasuis serovar 5 (strain SH0165)</name>
    <name type="common">Haemophilus parasuis</name>
    <dbReference type="NCBI Taxonomy" id="557723"/>
    <lineage>
        <taxon>Bacteria</taxon>
        <taxon>Pseudomonadati</taxon>
        <taxon>Pseudomonadota</taxon>
        <taxon>Gammaproteobacteria</taxon>
        <taxon>Pasteurellales</taxon>
        <taxon>Pasteurellaceae</taxon>
        <taxon>Glaesserella</taxon>
    </lineage>
</organism>
<dbReference type="EC" id="2.7.8.13" evidence="1"/>
<dbReference type="EMBL" id="CP001321">
    <property type="protein sequence ID" value="ACL31815.1"/>
    <property type="molecule type" value="Genomic_DNA"/>
</dbReference>
<dbReference type="RefSeq" id="WP_005714278.1">
    <property type="nucleotide sequence ID" value="NC_011852.1"/>
</dbReference>
<dbReference type="SMR" id="B8F3B3"/>
<dbReference type="STRING" id="557723.HAPS_0116"/>
<dbReference type="KEGG" id="hap:HAPS_0116"/>
<dbReference type="HOGENOM" id="CLU_023982_0_0_6"/>
<dbReference type="UniPathway" id="UPA00219"/>
<dbReference type="Proteomes" id="UP000006743">
    <property type="component" value="Chromosome"/>
</dbReference>
<dbReference type="GO" id="GO:0005886">
    <property type="term" value="C:plasma membrane"/>
    <property type="evidence" value="ECO:0007669"/>
    <property type="project" value="UniProtKB-SubCell"/>
</dbReference>
<dbReference type="GO" id="GO:0046872">
    <property type="term" value="F:metal ion binding"/>
    <property type="evidence" value="ECO:0007669"/>
    <property type="project" value="UniProtKB-KW"/>
</dbReference>
<dbReference type="GO" id="GO:0008963">
    <property type="term" value="F:phospho-N-acetylmuramoyl-pentapeptide-transferase activity"/>
    <property type="evidence" value="ECO:0007669"/>
    <property type="project" value="UniProtKB-UniRule"/>
</dbReference>
<dbReference type="GO" id="GO:0051992">
    <property type="term" value="F:UDP-N-acetylmuramoyl-L-alanyl-D-glutamyl-meso-2,6-diaminopimelyl-D-alanyl-D-alanine:undecaprenyl-phosphate transferase activity"/>
    <property type="evidence" value="ECO:0007669"/>
    <property type="project" value="RHEA"/>
</dbReference>
<dbReference type="GO" id="GO:0051301">
    <property type="term" value="P:cell division"/>
    <property type="evidence" value="ECO:0007669"/>
    <property type="project" value="UniProtKB-KW"/>
</dbReference>
<dbReference type="GO" id="GO:0071555">
    <property type="term" value="P:cell wall organization"/>
    <property type="evidence" value="ECO:0007669"/>
    <property type="project" value="UniProtKB-KW"/>
</dbReference>
<dbReference type="GO" id="GO:0009252">
    <property type="term" value="P:peptidoglycan biosynthetic process"/>
    <property type="evidence" value="ECO:0007669"/>
    <property type="project" value="UniProtKB-UniRule"/>
</dbReference>
<dbReference type="GO" id="GO:0008360">
    <property type="term" value="P:regulation of cell shape"/>
    <property type="evidence" value="ECO:0007669"/>
    <property type="project" value="UniProtKB-KW"/>
</dbReference>
<dbReference type="CDD" id="cd06852">
    <property type="entry name" value="GT_MraY"/>
    <property type="match status" value="1"/>
</dbReference>
<dbReference type="HAMAP" id="MF_00038">
    <property type="entry name" value="MraY"/>
    <property type="match status" value="1"/>
</dbReference>
<dbReference type="InterPro" id="IPR000715">
    <property type="entry name" value="Glycosyl_transferase_4"/>
</dbReference>
<dbReference type="InterPro" id="IPR003524">
    <property type="entry name" value="PNAcMuramoyl-5peptid_Trfase"/>
</dbReference>
<dbReference type="InterPro" id="IPR018480">
    <property type="entry name" value="PNAcMuramoyl-5peptid_Trfase_CS"/>
</dbReference>
<dbReference type="NCBIfam" id="TIGR00445">
    <property type="entry name" value="mraY"/>
    <property type="match status" value="1"/>
</dbReference>
<dbReference type="PANTHER" id="PTHR22926">
    <property type="entry name" value="PHOSPHO-N-ACETYLMURAMOYL-PENTAPEPTIDE-TRANSFERASE"/>
    <property type="match status" value="1"/>
</dbReference>
<dbReference type="PANTHER" id="PTHR22926:SF5">
    <property type="entry name" value="PHOSPHO-N-ACETYLMURAMOYL-PENTAPEPTIDE-TRANSFERASE HOMOLOG"/>
    <property type="match status" value="1"/>
</dbReference>
<dbReference type="Pfam" id="PF00953">
    <property type="entry name" value="Glycos_transf_4"/>
    <property type="match status" value="1"/>
</dbReference>
<dbReference type="Pfam" id="PF10555">
    <property type="entry name" value="MraY_sig1"/>
    <property type="match status" value="1"/>
</dbReference>
<dbReference type="PROSITE" id="PS01347">
    <property type="entry name" value="MRAY_1"/>
    <property type="match status" value="1"/>
</dbReference>
<dbReference type="PROSITE" id="PS01348">
    <property type="entry name" value="MRAY_2"/>
    <property type="match status" value="1"/>
</dbReference>
<gene>
    <name evidence="1" type="primary">mraY</name>
    <name type="ordered locus">HAPS_0116</name>
</gene>
<feature type="chain" id="PRO_1000117182" description="Phospho-N-acetylmuramoyl-pentapeptide-transferase">
    <location>
        <begin position="1"/>
        <end position="360"/>
    </location>
</feature>
<feature type="transmembrane region" description="Helical" evidence="1">
    <location>
        <begin position="21"/>
        <end position="41"/>
    </location>
</feature>
<feature type="transmembrane region" description="Helical" evidence="1">
    <location>
        <begin position="73"/>
        <end position="93"/>
    </location>
</feature>
<feature type="transmembrane region" description="Helical" evidence="1">
    <location>
        <begin position="98"/>
        <end position="118"/>
    </location>
</feature>
<feature type="transmembrane region" description="Helical" evidence="1">
    <location>
        <begin position="132"/>
        <end position="152"/>
    </location>
</feature>
<feature type="transmembrane region" description="Helical" evidence="1">
    <location>
        <begin position="168"/>
        <end position="188"/>
    </location>
</feature>
<feature type="transmembrane region" description="Helical" evidence="1">
    <location>
        <begin position="199"/>
        <end position="219"/>
    </location>
</feature>
<feature type="transmembrane region" description="Helical" evidence="1">
    <location>
        <begin position="236"/>
        <end position="256"/>
    </location>
</feature>
<feature type="transmembrane region" description="Helical" evidence="1">
    <location>
        <begin position="263"/>
        <end position="283"/>
    </location>
</feature>
<feature type="transmembrane region" description="Helical" evidence="1">
    <location>
        <begin position="288"/>
        <end position="308"/>
    </location>
</feature>
<feature type="transmembrane region" description="Helical" evidence="1">
    <location>
        <begin position="338"/>
        <end position="358"/>
    </location>
</feature>
<reference key="1">
    <citation type="journal article" date="2009" name="J. Bacteriol.">
        <title>Complete genome sequence of Haemophilus parasuis SH0165.</title>
        <authorList>
            <person name="Yue M."/>
            <person name="Yang F."/>
            <person name="Yang J."/>
            <person name="Bei W."/>
            <person name="Cai X."/>
            <person name="Chen L."/>
            <person name="Dong J."/>
            <person name="Zhou R."/>
            <person name="Jin M."/>
            <person name="Jin Q."/>
            <person name="Chen H."/>
        </authorList>
    </citation>
    <scope>NUCLEOTIDE SEQUENCE [LARGE SCALE GENOMIC DNA]</scope>
    <source>
        <strain>SH0165</strain>
    </source>
</reference>
<keyword id="KW-0131">Cell cycle</keyword>
<keyword id="KW-0132">Cell division</keyword>
<keyword id="KW-0997">Cell inner membrane</keyword>
<keyword id="KW-1003">Cell membrane</keyword>
<keyword id="KW-0133">Cell shape</keyword>
<keyword id="KW-0961">Cell wall biogenesis/degradation</keyword>
<keyword id="KW-0460">Magnesium</keyword>
<keyword id="KW-0472">Membrane</keyword>
<keyword id="KW-0479">Metal-binding</keyword>
<keyword id="KW-0573">Peptidoglycan synthesis</keyword>
<keyword id="KW-1185">Reference proteome</keyword>
<keyword id="KW-0808">Transferase</keyword>
<keyword id="KW-0812">Transmembrane</keyword>
<keyword id="KW-1133">Transmembrane helix</keyword>
<comment type="function">
    <text evidence="1">Catalyzes the initial step of the lipid cycle reactions in the biosynthesis of the cell wall peptidoglycan: transfers peptidoglycan precursor phospho-MurNAc-pentapeptide from UDP-MurNAc-pentapeptide onto the lipid carrier undecaprenyl phosphate, yielding undecaprenyl-pyrophosphoryl-MurNAc-pentapeptide, known as lipid I.</text>
</comment>
<comment type="catalytic activity">
    <reaction evidence="1">
        <text>UDP-N-acetyl-alpha-D-muramoyl-L-alanyl-gamma-D-glutamyl-meso-2,6-diaminopimeloyl-D-alanyl-D-alanine + di-trans,octa-cis-undecaprenyl phosphate = di-trans,octa-cis-undecaprenyl diphospho-N-acetyl-alpha-D-muramoyl-L-alanyl-D-glutamyl-meso-2,6-diaminopimeloyl-D-alanyl-D-alanine + UMP</text>
        <dbReference type="Rhea" id="RHEA:28386"/>
        <dbReference type="ChEBI" id="CHEBI:57865"/>
        <dbReference type="ChEBI" id="CHEBI:60392"/>
        <dbReference type="ChEBI" id="CHEBI:61386"/>
        <dbReference type="ChEBI" id="CHEBI:61387"/>
        <dbReference type="EC" id="2.7.8.13"/>
    </reaction>
</comment>
<comment type="cofactor">
    <cofactor evidence="1">
        <name>Mg(2+)</name>
        <dbReference type="ChEBI" id="CHEBI:18420"/>
    </cofactor>
</comment>
<comment type="pathway">
    <text evidence="1">Cell wall biogenesis; peptidoglycan biosynthesis.</text>
</comment>
<comment type="subcellular location">
    <subcellularLocation>
        <location evidence="1">Cell inner membrane</location>
        <topology evidence="1">Multi-pass membrane protein</topology>
    </subcellularLocation>
</comment>
<comment type="similarity">
    <text evidence="1">Belongs to the glycosyltransferase 4 family. MraY subfamily.</text>
</comment>
<sequence>MLVWLAEYLVQYNTAFNVVSYITFRSIMALLTALIIGLWIGSTVIRRLQILKFGQEVRHDGPESHYKKRGTPTMGGIMILFAIGVSTLLWADLRNPYVWFVLFILFGYGVVGFVDDYWKIARKNTDGLIARWKYFWLSVIALVSAFGMYAIGKDTAATQLVVPFFKDVMPQLGLFYIVLTYFVIVGTSNAVNLTDGLDGLAIVPLIMVAGAFALIAWATGNYNFAQYLHIPYIKYSGELVILCTAIVGAGLGFLWFNTYPAQVFMGDVGSLSLGGALGVIAVLVRQELLLVVMGGVFVVEALSVILQVGSYKLRQKRIFRMAPIHHHFELKGWPEPRVIVRFWIITLMLVLIGLVTLKLR</sequence>
<evidence type="ECO:0000255" key="1">
    <source>
        <dbReference type="HAMAP-Rule" id="MF_00038"/>
    </source>
</evidence>
<accession>B8F3B3</accession>